<dbReference type="EMBL" id="CP000233">
    <property type="protein sequence ID" value="ABD99282.1"/>
    <property type="molecule type" value="Genomic_DNA"/>
</dbReference>
<dbReference type="RefSeq" id="WP_003699755.1">
    <property type="nucleotide sequence ID" value="NC_007929.1"/>
</dbReference>
<dbReference type="RefSeq" id="YP_535365.1">
    <property type="nucleotide sequence ID" value="NC_007929.1"/>
</dbReference>
<dbReference type="SMR" id="Q1WUQ3"/>
<dbReference type="STRING" id="362948.LSL_0473"/>
<dbReference type="KEGG" id="lsl:LSL_0473"/>
<dbReference type="PATRIC" id="fig|362948.14.peg.549"/>
<dbReference type="HOGENOM" id="CLU_140243_3_1_9"/>
<dbReference type="OrthoDB" id="9811402at2"/>
<dbReference type="Proteomes" id="UP000006559">
    <property type="component" value="Chromosome"/>
</dbReference>
<dbReference type="Gene3D" id="1.20.1500.10">
    <property type="entry name" value="YheA/YmcA-like"/>
    <property type="match status" value="1"/>
</dbReference>
<dbReference type="HAMAP" id="MF_01526">
    <property type="entry name" value="UPF0342"/>
    <property type="match status" value="1"/>
</dbReference>
<dbReference type="InterPro" id="IPR010368">
    <property type="entry name" value="Com_YlbF"/>
</dbReference>
<dbReference type="InterPro" id="IPR023378">
    <property type="entry name" value="YheA/YmcA-like_dom_sf"/>
</dbReference>
<dbReference type="Pfam" id="PF06133">
    <property type="entry name" value="Com_YlbF"/>
    <property type="match status" value="1"/>
</dbReference>
<dbReference type="SUPFAM" id="SSF158622">
    <property type="entry name" value="YheA/YmcA-like"/>
    <property type="match status" value="1"/>
</dbReference>
<organism>
    <name type="scientific">Ligilactobacillus salivarius (strain UCC118)</name>
    <name type="common">Lactobacillus salivarius</name>
    <dbReference type="NCBI Taxonomy" id="362948"/>
    <lineage>
        <taxon>Bacteria</taxon>
        <taxon>Bacillati</taxon>
        <taxon>Bacillota</taxon>
        <taxon>Bacilli</taxon>
        <taxon>Lactobacillales</taxon>
        <taxon>Lactobacillaceae</taxon>
        <taxon>Ligilactobacillus</taxon>
    </lineage>
</organism>
<name>Y473_LIGS1</name>
<accession>Q1WUQ3</accession>
<sequence>MINVYDTANQLEKDLRESQEYKDLQAVVAKVKADDATFAVYKKLREAQKTLQEQQMQGTLDEKVMKSLQEISQEASQYPLMMELMEKERAISVLIDDLNKIIFKPLSEVYDIEG</sequence>
<gene>
    <name type="ordered locus">LSL_0473</name>
</gene>
<proteinExistence type="inferred from homology"/>
<feature type="chain" id="PRO_0000292736" description="UPF0342 protein LSL_0473">
    <location>
        <begin position="1"/>
        <end position="114"/>
    </location>
</feature>
<comment type="similarity">
    <text evidence="1">Belongs to the UPF0342 family.</text>
</comment>
<protein>
    <recommendedName>
        <fullName evidence="1">UPF0342 protein LSL_0473</fullName>
    </recommendedName>
</protein>
<keyword id="KW-1185">Reference proteome</keyword>
<evidence type="ECO:0000255" key="1">
    <source>
        <dbReference type="HAMAP-Rule" id="MF_01526"/>
    </source>
</evidence>
<reference key="1">
    <citation type="journal article" date="2006" name="Proc. Natl. Acad. Sci. U.S.A.">
        <title>Multireplicon genome architecture of Lactobacillus salivarius.</title>
        <authorList>
            <person name="Claesson M.J."/>
            <person name="Li Y."/>
            <person name="Leahy S."/>
            <person name="Canchaya C."/>
            <person name="van Pijkeren J.P."/>
            <person name="Cerdeno-Tarraga A.M."/>
            <person name="Parkhill J."/>
            <person name="Flynn S."/>
            <person name="O'Sullivan G.C."/>
            <person name="Collins J.K."/>
            <person name="Higgins D."/>
            <person name="Shanahan F."/>
            <person name="Fitzgerald G.F."/>
            <person name="van Sinderen D."/>
            <person name="O'Toole P.W."/>
        </authorList>
    </citation>
    <scope>NUCLEOTIDE SEQUENCE [LARGE SCALE GENOMIC DNA]</scope>
    <source>
        <strain>UCC118</strain>
    </source>
</reference>